<keyword id="KW-0963">Cytoplasm</keyword>
<keyword id="KW-0671">Queuosine biosynthesis</keyword>
<keyword id="KW-0949">S-adenosyl-L-methionine</keyword>
<keyword id="KW-0808">Transferase</keyword>
<feature type="chain" id="PRO_1000015188" description="S-adenosylmethionine:tRNA ribosyltransferase-isomerase">
    <location>
        <begin position="1"/>
        <end position="360"/>
    </location>
</feature>
<organism>
    <name type="scientific">Burkholderia mallei (strain NCTC 10247)</name>
    <dbReference type="NCBI Taxonomy" id="320389"/>
    <lineage>
        <taxon>Bacteria</taxon>
        <taxon>Pseudomonadati</taxon>
        <taxon>Pseudomonadota</taxon>
        <taxon>Betaproteobacteria</taxon>
        <taxon>Burkholderiales</taxon>
        <taxon>Burkholderiaceae</taxon>
        <taxon>Burkholderia</taxon>
        <taxon>pseudomallei group</taxon>
    </lineage>
</organism>
<proteinExistence type="inferred from homology"/>
<comment type="function">
    <text evidence="1">Transfers and isomerizes the ribose moiety from AdoMet to the 7-aminomethyl group of 7-deazaguanine (preQ1-tRNA) to give epoxyqueuosine (oQ-tRNA).</text>
</comment>
<comment type="catalytic activity">
    <reaction evidence="1">
        <text>7-aminomethyl-7-carbaguanosine(34) in tRNA + S-adenosyl-L-methionine = epoxyqueuosine(34) in tRNA + adenine + L-methionine + 2 H(+)</text>
        <dbReference type="Rhea" id="RHEA:32155"/>
        <dbReference type="Rhea" id="RHEA-COMP:10342"/>
        <dbReference type="Rhea" id="RHEA-COMP:18582"/>
        <dbReference type="ChEBI" id="CHEBI:15378"/>
        <dbReference type="ChEBI" id="CHEBI:16708"/>
        <dbReference type="ChEBI" id="CHEBI:57844"/>
        <dbReference type="ChEBI" id="CHEBI:59789"/>
        <dbReference type="ChEBI" id="CHEBI:82833"/>
        <dbReference type="ChEBI" id="CHEBI:194443"/>
        <dbReference type="EC" id="2.4.99.17"/>
    </reaction>
</comment>
<comment type="pathway">
    <text evidence="1">tRNA modification; tRNA-queuosine biosynthesis.</text>
</comment>
<comment type="subunit">
    <text evidence="1">Monomer.</text>
</comment>
<comment type="subcellular location">
    <subcellularLocation>
        <location evidence="1">Cytoplasm</location>
    </subcellularLocation>
</comment>
<comment type="similarity">
    <text evidence="1">Belongs to the QueA family.</text>
</comment>
<evidence type="ECO:0000255" key="1">
    <source>
        <dbReference type="HAMAP-Rule" id="MF_00113"/>
    </source>
</evidence>
<reference key="1">
    <citation type="journal article" date="2010" name="Genome Biol. Evol.">
        <title>Continuing evolution of Burkholderia mallei through genome reduction and large-scale rearrangements.</title>
        <authorList>
            <person name="Losada L."/>
            <person name="Ronning C.M."/>
            <person name="DeShazer D."/>
            <person name="Woods D."/>
            <person name="Fedorova N."/>
            <person name="Kim H.S."/>
            <person name="Shabalina S.A."/>
            <person name="Pearson T.R."/>
            <person name="Brinkac L."/>
            <person name="Tan P."/>
            <person name="Nandi T."/>
            <person name="Crabtree J."/>
            <person name="Badger J."/>
            <person name="Beckstrom-Sternberg S."/>
            <person name="Saqib M."/>
            <person name="Schutzer S.E."/>
            <person name="Keim P."/>
            <person name="Nierman W.C."/>
        </authorList>
    </citation>
    <scope>NUCLEOTIDE SEQUENCE [LARGE SCALE GENOMIC DNA]</scope>
    <source>
        <strain>NCTC 10247</strain>
    </source>
</reference>
<name>QUEA_BURM7</name>
<dbReference type="EC" id="2.4.99.17" evidence="1"/>
<dbReference type="EMBL" id="CP000548">
    <property type="protein sequence ID" value="ABO05193.1"/>
    <property type="molecule type" value="Genomic_DNA"/>
</dbReference>
<dbReference type="RefSeq" id="WP_004194109.1">
    <property type="nucleotide sequence ID" value="NZ_CP007802.1"/>
</dbReference>
<dbReference type="SMR" id="A3MPB4"/>
<dbReference type="KEGG" id="bmaz:BM44_740"/>
<dbReference type="KEGG" id="bmn:BMA10247_2574"/>
<dbReference type="PATRIC" id="fig|320389.8.peg.816"/>
<dbReference type="UniPathway" id="UPA00392"/>
<dbReference type="GO" id="GO:0005737">
    <property type="term" value="C:cytoplasm"/>
    <property type="evidence" value="ECO:0007669"/>
    <property type="project" value="UniProtKB-SubCell"/>
</dbReference>
<dbReference type="GO" id="GO:0051075">
    <property type="term" value="F:S-adenosylmethionine:tRNA ribosyltransferase-isomerase activity"/>
    <property type="evidence" value="ECO:0007669"/>
    <property type="project" value="UniProtKB-EC"/>
</dbReference>
<dbReference type="GO" id="GO:0008616">
    <property type="term" value="P:queuosine biosynthetic process"/>
    <property type="evidence" value="ECO:0007669"/>
    <property type="project" value="UniProtKB-UniRule"/>
</dbReference>
<dbReference type="GO" id="GO:0002099">
    <property type="term" value="P:tRNA wobble guanine modification"/>
    <property type="evidence" value="ECO:0007669"/>
    <property type="project" value="TreeGrafter"/>
</dbReference>
<dbReference type="FunFam" id="3.40.1780.10:FF:000001">
    <property type="entry name" value="S-adenosylmethionine:tRNA ribosyltransferase-isomerase"/>
    <property type="match status" value="1"/>
</dbReference>
<dbReference type="Gene3D" id="2.40.10.240">
    <property type="entry name" value="QueA-like"/>
    <property type="match status" value="1"/>
</dbReference>
<dbReference type="Gene3D" id="3.40.1780.10">
    <property type="entry name" value="QueA-like"/>
    <property type="match status" value="1"/>
</dbReference>
<dbReference type="HAMAP" id="MF_00113">
    <property type="entry name" value="QueA"/>
    <property type="match status" value="1"/>
</dbReference>
<dbReference type="InterPro" id="IPR003699">
    <property type="entry name" value="QueA"/>
</dbReference>
<dbReference type="InterPro" id="IPR042118">
    <property type="entry name" value="QueA_dom1"/>
</dbReference>
<dbReference type="InterPro" id="IPR042119">
    <property type="entry name" value="QueA_dom2"/>
</dbReference>
<dbReference type="InterPro" id="IPR036100">
    <property type="entry name" value="QueA_sf"/>
</dbReference>
<dbReference type="NCBIfam" id="NF001140">
    <property type="entry name" value="PRK00147.1"/>
    <property type="match status" value="1"/>
</dbReference>
<dbReference type="NCBIfam" id="TIGR00113">
    <property type="entry name" value="queA"/>
    <property type="match status" value="1"/>
</dbReference>
<dbReference type="PANTHER" id="PTHR30307">
    <property type="entry name" value="S-ADENOSYLMETHIONINE:TRNA RIBOSYLTRANSFERASE-ISOMERASE"/>
    <property type="match status" value="1"/>
</dbReference>
<dbReference type="PANTHER" id="PTHR30307:SF0">
    <property type="entry name" value="S-ADENOSYLMETHIONINE:TRNA RIBOSYLTRANSFERASE-ISOMERASE"/>
    <property type="match status" value="1"/>
</dbReference>
<dbReference type="Pfam" id="PF02547">
    <property type="entry name" value="Queuosine_synth"/>
    <property type="match status" value="1"/>
</dbReference>
<dbReference type="SUPFAM" id="SSF111337">
    <property type="entry name" value="QueA-like"/>
    <property type="match status" value="1"/>
</dbReference>
<sequence length="360" mass="39136">MLTLSDFDFDLPPELIAQTALPERSASRLLEVDNTNPSAPPRLIDRRFAELPACVAPGDLLVFNDTKVLKARFFGRKASGGKIEVLIERVTGERTALAQIRASKSPPPGTTLTLADAFDVTVGERVEPFFTLHFPDNCLVLIERHGRLPLPPYIEHAPDAADETRYQTVFAANPGAVAAPTAGLHFDDAVLAALEARGVERATLTLHVGAGTFQPVRVENLAEHRMHSESYELTDALVEKIAATRARGGRVIAVGTTSMRALEAAARDAQAAGRPLAATRAETDIFITPGYRFRVVDRLVTNFHLPKSTLLMLVSAFAGIETIRAAYRHAIDARYRFFSYGDAMLLTRRDDAAEATHGGA</sequence>
<gene>
    <name evidence="1" type="primary">queA</name>
    <name type="ordered locus">BMA10247_2574</name>
</gene>
<accession>A3MPB4</accession>
<protein>
    <recommendedName>
        <fullName evidence="1">S-adenosylmethionine:tRNA ribosyltransferase-isomerase</fullName>
        <ecNumber evidence="1">2.4.99.17</ecNumber>
    </recommendedName>
    <alternativeName>
        <fullName evidence="1">Queuosine biosynthesis protein QueA</fullName>
    </alternativeName>
</protein>